<reference key="1">
    <citation type="journal article" date="1998" name="Science">
        <title>Genome sequence of the nematode C. elegans: a platform for investigating biology.</title>
        <authorList>
            <consortium name="The C. elegans sequencing consortium"/>
        </authorList>
    </citation>
    <scope>NUCLEOTIDE SEQUENCE [LARGE SCALE GENOMIC DNA]</scope>
    <source>
        <strain>Bristol N2</strain>
    </source>
</reference>
<reference key="2">
    <citation type="journal article" date="2001" name="Cell. Mol. Life Sci.">
        <title>A conserved family of nuclear export receptors mediates the exit of messenger RNA to the cytoplasm.</title>
        <authorList>
            <person name="Izaurralde E."/>
        </authorList>
    </citation>
    <scope>SUBCELLULAR LOCATION</scope>
</reference>
<reference key="3">
    <citation type="journal article" date="2013" name="Mol. Cell. Biol.">
        <title>A specific set of exon junction complex subunits is required for the nuclear retention of unspliced RNAs in Caenorhabditis elegans.</title>
        <authorList>
            <person name="Shiimori M."/>
            <person name="Inoue K."/>
            <person name="Sakamoto H."/>
        </authorList>
    </citation>
    <scope>FUNCTION</scope>
    <scope>DISRUPTION PHENOTYPE</scope>
</reference>
<dbReference type="EMBL" id="BX284605">
    <property type="protein sequence ID" value="CAB02733.2"/>
    <property type="molecule type" value="Genomic_DNA"/>
</dbReference>
<dbReference type="PIR" id="T19315">
    <property type="entry name" value="T19315"/>
</dbReference>
<dbReference type="RefSeq" id="NP_506568.2">
    <property type="nucleotide sequence ID" value="NM_074167.8"/>
</dbReference>
<dbReference type="PDB" id="3NV0">
    <property type="method" value="X-ray"/>
    <property type="resolution" value="1.84 A"/>
    <property type="chains" value="A=202-405"/>
</dbReference>
<dbReference type="PDBsum" id="3NV0"/>
<dbReference type="SMR" id="Q9XVS8"/>
<dbReference type="BioGRID" id="44942">
    <property type="interactions" value="5"/>
</dbReference>
<dbReference type="FunCoup" id="Q9XVS8">
    <property type="interactions" value="1520"/>
</dbReference>
<dbReference type="IntAct" id="Q9XVS8">
    <property type="interactions" value="2"/>
</dbReference>
<dbReference type="STRING" id="6239.C15H11.6.2"/>
<dbReference type="PaxDb" id="6239-C15H11.6.1"/>
<dbReference type="PeptideAtlas" id="Q9XVS8"/>
<dbReference type="EnsemblMetazoa" id="C15H11.6.1">
    <property type="protein sequence ID" value="C15H11.6.1"/>
    <property type="gene ID" value="WBGene00003835"/>
</dbReference>
<dbReference type="GeneID" id="179938"/>
<dbReference type="KEGG" id="cel:CELE_C15H11.6"/>
<dbReference type="UCSC" id="C15H11.6.1">
    <property type="organism name" value="c. elegans"/>
</dbReference>
<dbReference type="AGR" id="WB:WBGene00003835"/>
<dbReference type="CTD" id="179938"/>
<dbReference type="WormBase" id="C15H11.6">
    <property type="protein sequence ID" value="CE36102"/>
    <property type="gene ID" value="WBGene00003835"/>
    <property type="gene designation" value="nxf-2"/>
</dbReference>
<dbReference type="eggNOG" id="KOG3763">
    <property type="taxonomic scope" value="Eukaryota"/>
</dbReference>
<dbReference type="GeneTree" id="ENSGT00390000007539"/>
<dbReference type="HOGENOM" id="CLU_685590_0_0_1"/>
<dbReference type="InParanoid" id="Q9XVS8"/>
<dbReference type="OMA" id="YDKTWIV"/>
<dbReference type="OrthoDB" id="25872at2759"/>
<dbReference type="PhylomeDB" id="Q9XVS8"/>
<dbReference type="Reactome" id="R-CEL-159236">
    <property type="pathway name" value="Transport of Mature mRNA derived from an Intron-Containing Transcript"/>
</dbReference>
<dbReference type="EvolutionaryTrace" id="Q9XVS8"/>
<dbReference type="PRO" id="PR:Q9XVS8"/>
<dbReference type="Proteomes" id="UP000001940">
    <property type="component" value="Chromosome V"/>
</dbReference>
<dbReference type="Bgee" id="WBGene00003835">
    <property type="expression patterns" value="Expressed in germ line (C elegans) and 4 other cell types or tissues"/>
</dbReference>
<dbReference type="GO" id="GO:0005634">
    <property type="term" value="C:nucleus"/>
    <property type="evidence" value="ECO:0000318"/>
    <property type="project" value="GO_Central"/>
</dbReference>
<dbReference type="GO" id="GO:0003723">
    <property type="term" value="F:RNA binding"/>
    <property type="evidence" value="ECO:0000318"/>
    <property type="project" value="GO_Central"/>
</dbReference>
<dbReference type="GO" id="GO:0016973">
    <property type="term" value="P:poly(A)+ mRNA export from nucleus"/>
    <property type="evidence" value="ECO:0000318"/>
    <property type="project" value="GO_Central"/>
</dbReference>
<dbReference type="FunFam" id="3.10.450.50:FF:000004">
    <property type="entry name" value="Nuclear RNA export factor 1"/>
    <property type="match status" value="1"/>
</dbReference>
<dbReference type="FunFam" id="3.80.10.10:FF:000384">
    <property type="entry name" value="Nuclear RNA export factor 1"/>
    <property type="match status" value="1"/>
</dbReference>
<dbReference type="Gene3D" id="3.10.450.50">
    <property type="match status" value="1"/>
</dbReference>
<dbReference type="Gene3D" id="3.80.10.10">
    <property type="entry name" value="Ribonuclease Inhibitor"/>
    <property type="match status" value="1"/>
</dbReference>
<dbReference type="InterPro" id="IPR001611">
    <property type="entry name" value="Leu-rich_rpt"/>
</dbReference>
<dbReference type="InterPro" id="IPR032675">
    <property type="entry name" value="LRR_dom_sf"/>
</dbReference>
<dbReference type="InterPro" id="IPR032710">
    <property type="entry name" value="NTF2-like_dom_sf"/>
</dbReference>
<dbReference type="InterPro" id="IPR002075">
    <property type="entry name" value="NTF2_dom"/>
</dbReference>
<dbReference type="InterPro" id="IPR018222">
    <property type="entry name" value="Nuclear_transport_factor_2_euk"/>
</dbReference>
<dbReference type="InterPro" id="IPR030217">
    <property type="entry name" value="NXF_fam"/>
</dbReference>
<dbReference type="PANTHER" id="PTHR10662">
    <property type="entry name" value="NUCLEAR RNA EXPORT FACTOR"/>
    <property type="match status" value="1"/>
</dbReference>
<dbReference type="PANTHER" id="PTHR10662:SF49">
    <property type="entry name" value="NUCLEAR RNA EXPORT FACTOR 2"/>
    <property type="match status" value="1"/>
</dbReference>
<dbReference type="Pfam" id="PF24048">
    <property type="entry name" value="LRR_NXF1-5"/>
    <property type="match status" value="1"/>
</dbReference>
<dbReference type="Pfam" id="PF22602">
    <property type="entry name" value="NXF_NTF2"/>
    <property type="match status" value="1"/>
</dbReference>
<dbReference type="SUPFAM" id="SSF52058">
    <property type="entry name" value="L domain-like"/>
    <property type="match status" value="1"/>
</dbReference>
<dbReference type="SUPFAM" id="SSF54427">
    <property type="entry name" value="NTF2-like"/>
    <property type="match status" value="1"/>
</dbReference>
<dbReference type="PROSITE" id="PS51450">
    <property type="entry name" value="LRR"/>
    <property type="match status" value="2"/>
</dbReference>
<dbReference type="PROSITE" id="PS50177">
    <property type="entry name" value="NTF2_DOMAIN"/>
    <property type="match status" value="1"/>
</dbReference>
<comment type="function">
    <text evidence="4">Involved in the export of cellular mRNA to the cytoplasm (PubMed:23149939). Plays a role in the nuclear retention of unspliced mRNAs (PubMed:23149939).</text>
</comment>
<comment type="interaction">
    <interactant intactId="EBI-2007577">
        <id>Q9XVS8</id>
    </interactant>
    <interactant intactId="EBI-2006451">
        <id>Q9U757</id>
        <label>nxt-1</label>
    </interactant>
    <organismsDiffer>false</organismsDiffer>
    <experiments>5</experiments>
</comment>
<comment type="subcellular location">
    <subcellularLocation>
        <location evidence="3">Nucleus</location>
    </subcellularLocation>
    <text>Not localized at the nuclear rim.</text>
</comment>
<comment type="domain">
    <text>The RNA-binding domain is a non-canonical RNP-type domain.</text>
</comment>
<comment type="disruption phenotype">
    <text evidence="4">RNAi-mediated knockdown results in severe growth retardation, lethality and reduces the accumulation of unspliced tra-2 in the cytoplasm of rnp-4/RBM8A RNAi mutants.</text>
</comment>
<comment type="similarity">
    <text evidence="5">Belongs to the NXF family.</text>
</comment>
<accession>Q9XVS8</accession>
<name>NXF2_CAEEL</name>
<gene>
    <name evidence="6" type="primary">nxf-2</name>
    <name evidence="6" type="synonym">nfx-2</name>
    <name evidence="6" type="ORF">C15H11.6</name>
</gene>
<evidence type="ECO:0000255" key="1">
    <source>
        <dbReference type="PROSITE-ProRule" id="PRU00137"/>
    </source>
</evidence>
<evidence type="ECO:0000256" key="2">
    <source>
        <dbReference type="SAM" id="MobiDB-lite"/>
    </source>
</evidence>
<evidence type="ECO:0000269" key="3">
    <source>
    </source>
</evidence>
<evidence type="ECO:0000269" key="4">
    <source>
    </source>
</evidence>
<evidence type="ECO:0000305" key="5"/>
<evidence type="ECO:0000312" key="6">
    <source>
        <dbReference type="WormBase" id="C15H11.6"/>
    </source>
</evidence>
<evidence type="ECO:0007829" key="7">
    <source>
        <dbReference type="PDB" id="3NV0"/>
    </source>
</evidence>
<proteinExistence type="evidence at protein level"/>
<organism>
    <name type="scientific">Caenorhabditis elegans</name>
    <dbReference type="NCBI Taxonomy" id="6239"/>
    <lineage>
        <taxon>Eukaryota</taxon>
        <taxon>Metazoa</taxon>
        <taxon>Ecdysozoa</taxon>
        <taxon>Nematoda</taxon>
        <taxon>Chromadorea</taxon>
        <taxon>Rhabditida</taxon>
        <taxon>Rhabditina</taxon>
        <taxon>Rhabditomorpha</taxon>
        <taxon>Rhabditoidea</taxon>
        <taxon>Rhabditidae</taxon>
        <taxon>Peloderinae</taxon>
        <taxon>Caenorhabditis</taxon>
    </lineage>
</organism>
<sequence>MRGQNRRGYRNIEGRLSLSSHSSHSSPRQTHVTNLRPAEIKVVQDVVDGCYVATDDVLNLSNFSKNTEFVERDMLMCLTKTRVMSVVLQHIGYKYPRISGISFSNNRLCHLDHLSSLSSISKFLKFLDLSHNQISSGEELKKLGTIPVETVFFEGNPVCEKFVQCAEYANFIQKTFPKCSNLDGMEVEPKPDHNRIEQIIPFRNGYYGSDEVRTLVEEFIITYYKIYDGADGQQTRKQLLDAYDTNNSTFTHTVVCLWDPIKFVMYPDSESYRMYLRTSHNVLNQEYFAANRASRISHGAMDIVVALSRLPATIHLMDTFVVDVFLVSATLLGFTLHGTFRDGPSAIKPENTEEHDNYFTRTFMVAPRGEGKVAIVSDQLFISSMSKRRGDQYRMLVETATDIDQ</sequence>
<protein>
    <recommendedName>
        <fullName>Nuclear RNA export factor 2</fullName>
    </recommendedName>
</protein>
<keyword id="KW-0002">3D-structure</keyword>
<keyword id="KW-0433">Leucine-rich repeat</keyword>
<keyword id="KW-0509">mRNA transport</keyword>
<keyword id="KW-0539">Nucleus</keyword>
<keyword id="KW-1185">Reference proteome</keyword>
<keyword id="KW-0677">Repeat</keyword>
<keyword id="KW-0694">RNA-binding</keyword>
<keyword id="KW-0813">Transport</keyword>
<feature type="chain" id="PRO_0000220537" description="Nuclear RNA export factor 2">
    <location>
        <begin position="1"/>
        <end position="405"/>
    </location>
</feature>
<feature type="domain" description="RRM">
    <location>
        <begin position="26"/>
        <end position="94"/>
    </location>
</feature>
<feature type="repeat" description="LRR 1">
    <location>
        <begin position="97"/>
        <end position="118"/>
    </location>
</feature>
<feature type="repeat" description="LRR 2">
    <location>
        <begin position="123"/>
        <end position="144"/>
    </location>
</feature>
<feature type="domain" description="NTF2" evidence="1">
    <location>
        <begin position="215"/>
        <end position="382"/>
    </location>
</feature>
<feature type="region of interest" description="Disordered" evidence="2">
    <location>
        <begin position="1"/>
        <end position="33"/>
    </location>
</feature>
<feature type="compositionally biased region" description="Low complexity" evidence="2">
    <location>
        <begin position="16"/>
        <end position="26"/>
    </location>
</feature>
<feature type="helix" evidence="7">
    <location>
        <begin position="210"/>
        <end position="227"/>
    </location>
</feature>
<feature type="helix" evidence="7">
    <location>
        <begin position="232"/>
        <end position="235"/>
    </location>
</feature>
<feature type="helix" evidence="7">
    <location>
        <begin position="236"/>
        <end position="242"/>
    </location>
</feature>
<feature type="strand" evidence="7">
    <location>
        <begin position="245"/>
        <end position="247"/>
    </location>
</feature>
<feature type="strand" evidence="7">
    <location>
        <begin position="249"/>
        <end position="255"/>
    </location>
</feature>
<feature type="strand" evidence="7">
    <location>
        <begin position="260"/>
        <end position="262"/>
    </location>
</feature>
<feature type="helix" evidence="7">
    <location>
        <begin position="269"/>
        <end position="277"/>
    </location>
</feature>
<feature type="helix" evidence="7">
    <location>
        <begin position="282"/>
        <end position="284"/>
    </location>
</feature>
<feature type="turn" evidence="7">
    <location>
        <begin position="287"/>
        <end position="290"/>
    </location>
</feature>
<feature type="helix" evidence="7">
    <location>
        <begin position="299"/>
        <end position="309"/>
    </location>
</feature>
<feature type="strand" evidence="7">
    <location>
        <begin position="313"/>
        <end position="315"/>
    </location>
</feature>
<feature type="helix" evidence="7">
    <location>
        <begin position="317"/>
        <end position="319"/>
    </location>
</feature>
<feature type="strand" evidence="7">
    <location>
        <begin position="321"/>
        <end position="327"/>
    </location>
</feature>
<feature type="strand" evidence="7">
    <location>
        <begin position="332"/>
        <end position="342"/>
    </location>
</feature>
<feature type="helix" evidence="7">
    <location>
        <begin position="344"/>
        <end position="347"/>
    </location>
</feature>
<feature type="strand" evidence="7">
    <location>
        <begin position="357"/>
        <end position="367"/>
    </location>
</feature>
<feature type="strand" evidence="7">
    <location>
        <begin position="373"/>
        <end position="383"/>
    </location>
</feature>
<feature type="helix" evidence="7">
    <location>
        <begin position="387"/>
        <end position="395"/>
    </location>
</feature>